<protein>
    <recommendedName>
        <fullName>Putative carboxypeptidase VC_A0337</fullName>
        <ecNumber>3.4.16.-</ecNumber>
    </recommendedName>
</protein>
<name>Y3137_VIBCH</name>
<organism>
    <name type="scientific">Vibrio cholerae serotype O1 (strain ATCC 39315 / El Tor Inaba N16961)</name>
    <dbReference type="NCBI Taxonomy" id="243277"/>
    <lineage>
        <taxon>Bacteria</taxon>
        <taxon>Pseudomonadati</taxon>
        <taxon>Pseudomonadota</taxon>
        <taxon>Gammaproteobacteria</taxon>
        <taxon>Vibrionales</taxon>
        <taxon>Vibrionaceae</taxon>
        <taxon>Vibrio</taxon>
    </lineage>
</organism>
<accession>O31020</accession>
<accession>Q9KMK4</accession>
<feature type="chain" id="PRO_0000172848" description="Putative carboxypeptidase VC_A0337">
    <location>
        <begin position="1"/>
        <end position="334"/>
    </location>
</feature>
<feature type="active site" description="Nucleophile" evidence="1">
    <location>
        <position position="112"/>
    </location>
</feature>
<feature type="active site" description="Charge relay system" evidence="1">
    <location>
        <position position="234"/>
    </location>
</feature>
<feature type="active site" description="Charge relay system" evidence="1">
    <location>
        <position position="302"/>
    </location>
</feature>
<evidence type="ECO:0000250" key="1"/>
<evidence type="ECO:0000305" key="2"/>
<dbReference type="EC" id="3.4.16.-"/>
<dbReference type="EMBL" id="AE003853">
    <property type="protein sequence ID" value="AAF96245.1"/>
    <property type="molecule type" value="Genomic_DNA"/>
</dbReference>
<dbReference type="EMBL" id="AF025662">
    <property type="protein sequence ID" value="AAB81977.1"/>
    <property type="status" value="ALT_INIT"/>
    <property type="molecule type" value="Genomic_DNA"/>
</dbReference>
<dbReference type="PIR" id="H82472">
    <property type="entry name" value="H82472"/>
</dbReference>
<dbReference type="RefSeq" id="NP_232733.1">
    <property type="nucleotide sequence ID" value="NC_002506.1"/>
</dbReference>
<dbReference type="RefSeq" id="WP_000964920.1">
    <property type="nucleotide sequence ID" value="NZ_LT906615.1"/>
</dbReference>
<dbReference type="SMR" id="O31020"/>
<dbReference type="STRING" id="243277.VC_A0337"/>
<dbReference type="MEROPS" id="S66.003"/>
<dbReference type="DNASU" id="2612508"/>
<dbReference type="EnsemblBacteria" id="AAF96245">
    <property type="protein sequence ID" value="AAF96245"/>
    <property type="gene ID" value="VC_A0337"/>
</dbReference>
<dbReference type="KEGG" id="vch:VC_A0337"/>
<dbReference type="PATRIC" id="fig|243277.26.peg.2971"/>
<dbReference type="eggNOG" id="COG1619">
    <property type="taxonomic scope" value="Bacteria"/>
</dbReference>
<dbReference type="HOGENOM" id="CLU_034346_1_1_6"/>
<dbReference type="Proteomes" id="UP000000584">
    <property type="component" value="Chromosome 2"/>
</dbReference>
<dbReference type="GO" id="GO:0005829">
    <property type="term" value="C:cytosol"/>
    <property type="evidence" value="ECO:0000318"/>
    <property type="project" value="GO_Central"/>
</dbReference>
<dbReference type="GO" id="GO:0004180">
    <property type="term" value="F:carboxypeptidase activity"/>
    <property type="evidence" value="ECO:0000318"/>
    <property type="project" value="GO_Central"/>
</dbReference>
<dbReference type="GO" id="GO:0008236">
    <property type="term" value="F:serine-type peptidase activity"/>
    <property type="evidence" value="ECO:0007669"/>
    <property type="project" value="UniProtKB-KW"/>
</dbReference>
<dbReference type="GO" id="GO:0006508">
    <property type="term" value="P:proteolysis"/>
    <property type="evidence" value="ECO:0007669"/>
    <property type="project" value="UniProtKB-KW"/>
</dbReference>
<dbReference type="CDD" id="cd07062">
    <property type="entry name" value="Peptidase_S66_mccF_like"/>
    <property type="match status" value="1"/>
</dbReference>
<dbReference type="FunFam" id="3.40.50.10740:FF:000002">
    <property type="entry name" value="Microcin immunity protein MccF"/>
    <property type="match status" value="1"/>
</dbReference>
<dbReference type="FunFam" id="3.50.30.60:FF:000002">
    <property type="entry name" value="Microcin immunity protein MccF"/>
    <property type="match status" value="1"/>
</dbReference>
<dbReference type="Gene3D" id="3.40.50.10740">
    <property type="entry name" value="Class I glutamine amidotransferase-like"/>
    <property type="match status" value="1"/>
</dbReference>
<dbReference type="Gene3D" id="3.50.30.60">
    <property type="entry name" value="LD-carboxypeptidase A C-terminal domain-like"/>
    <property type="match status" value="1"/>
</dbReference>
<dbReference type="InterPro" id="IPR027461">
    <property type="entry name" value="Carboxypeptidase_A_C_sf"/>
</dbReference>
<dbReference type="InterPro" id="IPR029062">
    <property type="entry name" value="Class_I_gatase-like"/>
</dbReference>
<dbReference type="InterPro" id="IPR027478">
    <property type="entry name" value="LdcA_N"/>
</dbReference>
<dbReference type="InterPro" id="IPR040449">
    <property type="entry name" value="Peptidase_S66_N"/>
</dbReference>
<dbReference type="InterPro" id="IPR040921">
    <property type="entry name" value="Peptidase_S66C"/>
</dbReference>
<dbReference type="InterPro" id="IPR003507">
    <property type="entry name" value="S66_fam"/>
</dbReference>
<dbReference type="PANTHER" id="PTHR30237:SF5">
    <property type="entry name" value="CARBOXYPEPTIDASE VC_A0337-RELATED"/>
    <property type="match status" value="1"/>
</dbReference>
<dbReference type="PANTHER" id="PTHR30237">
    <property type="entry name" value="MURAMOYLTETRAPEPTIDE CARBOXYPEPTIDASE"/>
    <property type="match status" value="1"/>
</dbReference>
<dbReference type="Pfam" id="PF02016">
    <property type="entry name" value="Peptidase_S66"/>
    <property type="match status" value="1"/>
</dbReference>
<dbReference type="Pfam" id="PF17676">
    <property type="entry name" value="Peptidase_S66C"/>
    <property type="match status" value="1"/>
</dbReference>
<dbReference type="PIRSF" id="PIRSF028757">
    <property type="entry name" value="LD-carboxypeptidase"/>
    <property type="match status" value="1"/>
</dbReference>
<dbReference type="SUPFAM" id="SSF52317">
    <property type="entry name" value="Class I glutamine amidotransferase-like"/>
    <property type="match status" value="1"/>
</dbReference>
<dbReference type="SUPFAM" id="SSF141986">
    <property type="entry name" value="LD-carboxypeptidase A C-terminal domain-like"/>
    <property type="match status" value="1"/>
</dbReference>
<proteinExistence type="inferred from homology"/>
<reference key="1">
    <citation type="journal article" date="2000" name="Nature">
        <title>DNA sequence of both chromosomes of the cholera pathogen Vibrio cholerae.</title>
        <authorList>
            <person name="Heidelberg J.F."/>
            <person name="Eisen J.A."/>
            <person name="Nelson W.C."/>
            <person name="Clayton R.A."/>
            <person name="Gwinn M.L."/>
            <person name="Dodson R.J."/>
            <person name="Haft D.H."/>
            <person name="Hickey E.K."/>
            <person name="Peterson J.D."/>
            <person name="Umayam L.A."/>
            <person name="Gill S.R."/>
            <person name="Nelson K.E."/>
            <person name="Read T.D."/>
            <person name="Tettelin H."/>
            <person name="Richardson D.L."/>
            <person name="Ermolaeva M.D."/>
            <person name="Vamathevan J.J."/>
            <person name="Bass S."/>
            <person name="Qin H."/>
            <person name="Dragoi I."/>
            <person name="Sellers P."/>
            <person name="McDonald L.A."/>
            <person name="Utterback T.R."/>
            <person name="Fleischmann R.D."/>
            <person name="Nierman W.C."/>
            <person name="White O."/>
            <person name="Salzberg S.L."/>
            <person name="Smith H.O."/>
            <person name="Colwell R.R."/>
            <person name="Mekalanos J.J."/>
            <person name="Venter J.C."/>
            <person name="Fraser C.M."/>
        </authorList>
    </citation>
    <scope>NUCLEOTIDE SEQUENCE [LARGE SCALE GENOMIC DNA]</scope>
    <source>
        <strain>ATCC 39315 / El Tor Inaba N16961</strain>
    </source>
</reference>
<reference key="2">
    <citation type="submission" date="1997-09" db="EMBL/GenBank/DDBJ databases">
        <authorList>
            <person name="Kaewrakon P."/>
            <person name="Manning P.A."/>
        </authorList>
    </citation>
    <scope>NUCLEOTIDE SEQUENCE [GENOMIC DNA] OF 74-334</scope>
    <source>
        <strain>ATCC 25870 / Classical Inaba 569B / Serotype O1</strain>
    </source>
</reference>
<keyword id="KW-0121">Carboxypeptidase</keyword>
<keyword id="KW-0378">Hydrolase</keyword>
<keyword id="KW-0645">Protease</keyword>
<keyword id="KW-1185">Reference proteome</keyword>
<keyword id="KW-0720">Serine protease</keyword>
<sequence>MLYAKALSIGDEIGFFSPSSPATAFAPNRFQRAKAYLKAQGFELVEGSLTGKSDYYRSGSIRERAEELNQLIRDPNVRCIMPTIGGNNSNSLLPYIDYEALRNDPKIIIGYSDVTALLLGIYAQTGLITFYGPALVASFGEYPPLVDETFHSFIDLLCSETNQYQYTMPSSWTDIKHDWETQHSAKPVYPNEWQFIGKGKVTGRIIGGNLNTMAGIWGSRYMPEIKVGDILLIEDSLKGIENVERSFAHLAACGVFERVSAIILGKHELFDNKGTGRTPLDVLIEVLADKNVPIFYGFDSCHTHPMLVTPLGVRGTIDFDNHTFKLEDRWVKAK</sequence>
<gene>
    <name type="ordered locus">VC_A0337</name>
</gene>
<comment type="similarity">
    <text evidence="2">Belongs to the peptidase S66 family.</text>
</comment>
<comment type="sequence caution" evidence="2">
    <conflict type="erroneous initiation">
        <sequence resource="EMBL-CDS" id="AAB81977"/>
    </conflict>
</comment>